<accession>A4WFH1</accession>
<keyword id="KW-0169">Cobalamin biosynthesis</keyword>
<keyword id="KW-0456">Lyase</keyword>
<keyword id="KW-0489">Methyltransferase</keyword>
<keyword id="KW-0511">Multifunctional enzyme</keyword>
<keyword id="KW-0520">NAD</keyword>
<keyword id="KW-0560">Oxidoreductase</keyword>
<keyword id="KW-0597">Phosphoprotein</keyword>
<keyword id="KW-0627">Porphyrin biosynthesis</keyword>
<keyword id="KW-0949">S-adenosyl-L-methionine</keyword>
<keyword id="KW-0808">Transferase</keyword>
<feature type="chain" id="PRO_0000330504" description="Siroheme synthase">
    <location>
        <begin position="1"/>
        <end position="457"/>
    </location>
</feature>
<feature type="region of interest" description="Precorrin-2 dehydrogenase /sirohydrochlorin ferrochelatase" evidence="1">
    <location>
        <begin position="1"/>
        <end position="204"/>
    </location>
</feature>
<feature type="region of interest" description="Uroporphyrinogen-III C-methyltransferase" evidence="1">
    <location>
        <begin position="216"/>
        <end position="457"/>
    </location>
</feature>
<feature type="active site" description="Proton acceptor" evidence="1">
    <location>
        <position position="248"/>
    </location>
</feature>
<feature type="active site" description="Proton donor" evidence="1">
    <location>
        <position position="270"/>
    </location>
</feature>
<feature type="binding site" evidence="1">
    <location>
        <begin position="22"/>
        <end position="23"/>
    </location>
    <ligand>
        <name>NAD(+)</name>
        <dbReference type="ChEBI" id="CHEBI:57540"/>
    </ligand>
</feature>
<feature type="binding site" evidence="1">
    <location>
        <begin position="43"/>
        <end position="44"/>
    </location>
    <ligand>
        <name>NAD(+)</name>
        <dbReference type="ChEBI" id="CHEBI:57540"/>
    </ligand>
</feature>
<feature type="binding site" evidence="1">
    <location>
        <position position="225"/>
    </location>
    <ligand>
        <name>S-adenosyl-L-methionine</name>
        <dbReference type="ChEBI" id="CHEBI:59789"/>
    </ligand>
</feature>
<feature type="binding site" evidence="1">
    <location>
        <begin position="301"/>
        <end position="303"/>
    </location>
    <ligand>
        <name>S-adenosyl-L-methionine</name>
        <dbReference type="ChEBI" id="CHEBI:59789"/>
    </ligand>
</feature>
<feature type="binding site" evidence="1">
    <location>
        <position position="306"/>
    </location>
    <ligand>
        <name>S-adenosyl-L-methionine</name>
        <dbReference type="ChEBI" id="CHEBI:59789"/>
    </ligand>
</feature>
<feature type="binding site" evidence="1">
    <location>
        <begin position="331"/>
        <end position="332"/>
    </location>
    <ligand>
        <name>S-adenosyl-L-methionine</name>
        <dbReference type="ChEBI" id="CHEBI:59789"/>
    </ligand>
</feature>
<feature type="binding site" evidence="1">
    <location>
        <position position="382"/>
    </location>
    <ligand>
        <name>S-adenosyl-L-methionine</name>
        <dbReference type="ChEBI" id="CHEBI:59789"/>
    </ligand>
</feature>
<feature type="binding site" evidence="1">
    <location>
        <position position="411"/>
    </location>
    <ligand>
        <name>S-adenosyl-L-methionine</name>
        <dbReference type="ChEBI" id="CHEBI:59789"/>
    </ligand>
</feature>
<feature type="modified residue" description="Phosphoserine" evidence="1">
    <location>
        <position position="128"/>
    </location>
</feature>
<name>CYSG_ENT38</name>
<dbReference type="EC" id="2.1.1.107" evidence="1"/>
<dbReference type="EC" id="1.3.1.76" evidence="1"/>
<dbReference type="EC" id="4.99.1.4" evidence="1"/>
<dbReference type="EMBL" id="CP000653">
    <property type="protein sequence ID" value="ABP62451.1"/>
    <property type="molecule type" value="Genomic_DNA"/>
</dbReference>
<dbReference type="RefSeq" id="WP_015960757.1">
    <property type="nucleotide sequence ID" value="NC_009436.1"/>
</dbReference>
<dbReference type="SMR" id="A4WFH1"/>
<dbReference type="STRING" id="399742.Ent638_3796"/>
<dbReference type="KEGG" id="ent:Ent638_3796"/>
<dbReference type="eggNOG" id="COG0007">
    <property type="taxonomic scope" value="Bacteria"/>
</dbReference>
<dbReference type="eggNOG" id="COG1648">
    <property type="taxonomic scope" value="Bacteria"/>
</dbReference>
<dbReference type="HOGENOM" id="CLU_011276_2_1_6"/>
<dbReference type="OrthoDB" id="9815856at2"/>
<dbReference type="UniPathway" id="UPA00148">
    <property type="reaction ID" value="UER00211"/>
</dbReference>
<dbReference type="UniPathway" id="UPA00148">
    <property type="reaction ID" value="UER00222"/>
</dbReference>
<dbReference type="UniPathway" id="UPA00262">
    <property type="reaction ID" value="UER00211"/>
</dbReference>
<dbReference type="UniPathway" id="UPA00262">
    <property type="reaction ID" value="UER00222"/>
</dbReference>
<dbReference type="UniPathway" id="UPA00262">
    <property type="reaction ID" value="UER00376"/>
</dbReference>
<dbReference type="Proteomes" id="UP000000230">
    <property type="component" value="Chromosome"/>
</dbReference>
<dbReference type="GO" id="GO:0051287">
    <property type="term" value="F:NAD binding"/>
    <property type="evidence" value="ECO:0007669"/>
    <property type="project" value="InterPro"/>
</dbReference>
<dbReference type="GO" id="GO:0043115">
    <property type="term" value="F:precorrin-2 dehydrogenase activity"/>
    <property type="evidence" value="ECO:0007669"/>
    <property type="project" value="UniProtKB-UniRule"/>
</dbReference>
<dbReference type="GO" id="GO:0051266">
    <property type="term" value="F:sirohydrochlorin ferrochelatase activity"/>
    <property type="evidence" value="ECO:0007669"/>
    <property type="project" value="UniProtKB-EC"/>
</dbReference>
<dbReference type="GO" id="GO:0004851">
    <property type="term" value="F:uroporphyrin-III C-methyltransferase activity"/>
    <property type="evidence" value="ECO:0007669"/>
    <property type="project" value="UniProtKB-UniRule"/>
</dbReference>
<dbReference type="GO" id="GO:0009236">
    <property type="term" value="P:cobalamin biosynthetic process"/>
    <property type="evidence" value="ECO:0007669"/>
    <property type="project" value="UniProtKB-UniRule"/>
</dbReference>
<dbReference type="GO" id="GO:0032259">
    <property type="term" value="P:methylation"/>
    <property type="evidence" value="ECO:0007669"/>
    <property type="project" value="UniProtKB-KW"/>
</dbReference>
<dbReference type="GO" id="GO:0019354">
    <property type="term" value="P:siroheme biosynthetic process"/>
    <property type="evidence" value="ECO:0007669"/>
    <property type="project" value="UniProtKB-UniRule"/>
</dbReference>
<dbReference type="CDD" id="cd11642">
    <property type="entry name" value="SUMT"/>
    <property type="match status" value="1"/>
</dbReference>
<dbReference type="FunFam" id="1.10.8.210:FF:000001">
    <property type="entry name" value="Siroheme synthase"/>
    <property type="match status" value="1"/>
</dbReference>
<dbReference type="FunFam" id="3.30.160.110:FF:000001">
    <property type="entry name" value="Siroheme synthase"/>
    <property type="match status" value="1"/>
</dbReference>
<dbReference type="FunFam" id="3.30.950.10:FF:000001">
    <property type="entry name" value="Siroheme synthase"/>
    <property type="match status" value="1"/>
</dbReference>
<dbReference type="FunFam" id="3.40.1010.10:FF:000001">
    <property type="entry name" value="Siroheme synthase"/>
    <property type="match status" value="1"/>
</dbReference>
<dbReference type="FunFam" id="3.40.50.720:FF:000092">
    <property type="entry name" value="Siroheme synthase"/>
    <property type="match status" value="1"/>
</dbReference>
<dbReference type="Gene3D" id="3.40.1010.10">
    <property type="entry name" value="Cobalt-precorrin-4 Transmethylase, Domain 1"/>
    <property type="match status" value="1"/>
</dbReference>
<dbReference type="Gene3D" id="3.30.950.10">
    <property type="entry name" value="Methyltransferase, Cobalt-precorrin-4 Transmethylase, Domain 2"/>
    <property type="match status" value="1"/>
</dbReference>
<dbReference type="Gene3D" id="3.40.50.720">
    <property type="entry name" value="NAD(P)-binding Rossmann-like Domain"/>
    <property type="match status" value="1"/>
</dbReference>
<dbReference type="Gene3D" id="1.10.8.210">
    <property type="entry name" value="Sirohaem synthase, dimerisation domain"/>
    <property type="match status" value="1"/>
</dbReference>
<dbReference type="Gene3D" id="3.30.160.110">
    <property type="entry name" value="Siroheme synthase, domain 2"/>
    <property type="match status" value="1"/>
</dbReference>
<dbReference type="HAMAP" id="MF_01646">
    <property type="entry name" value="Siroheme_synth"/>
    <property type="match status" value="1"/>
</dbReference>
<dbReference type="InterPro" id="IPR000878">
    <property type="entry name" value="4pyrrol_Mease"/>
</dbReference>
<dbReference type="InterPro" id="IPR035996">
    <property type="entry name" value="4pyrrol_Methylase_sf"/>
</dbReference>
<dbReference type="InterPro" id="IPR014777">
    <property type="entry name" value="4pyrrole_Mease_sub1"/>
</dbReference>
<dbReference type="InterPro" id="IPR014776">
    <property type="entry name" value="4pyrrole_Mease_sub2"/>
</dbReference>
<dbReference type="InterPro" id="IPR006366">
    <property type="entry name" value="CobA/CysG_C"/>
</dbReference>
<dbReference type="InterPro" id="IPR036291">
    <property type="entry name" value="NAD(P)-bd_dom_sf"/>
</dbReference>
<dbReference type="InterPro" id="IPR050161">
    <property type="entry name" value="Siro_Cobalamin_biosynth"/>
</dbReference>
<dbReference type="InterPro" id="IPR037115">
    <property type="entry name" value="Sirohaem_synt_dimer_dom_sf"/>
</dbReference>
<dbReference type="InterPro" id="IPR012409">
    <property type="entry name" value="Sirohaem_synth"/>
</dbReference>
<dbReference type="InterPro" id="IPR028281">
    <property type="entry name" value="Sirohaem_synthase_central"/>
</dbReference>
<dbReference type="InterPro" id="IPR019478">
    <property type="entry name" value="Sirohaem_synthase_dimer_dom"/>
</dbReference>
<dbReference type="InterPro" id="IPR006367">
    <property type="entry name" value="Sirohaem_synthase_N"/>
</dbReference>
<dbReference type="InterPro" id="IPR003043">
    <property type="entry name" value="Uropor_MeTrfase_CS"/>
</dbReference>
<dbReference type="NCBIfam" id="TIGR01469">
    <property type="entry name" value="cobA_cysG_Cterm"/>
    <property type="match status" value="1"/>
</dbReference>
<dbReference type="NCBIfam" id="TIGR01470">
    <property type="entry name" value="cysG_Nterm"/>
    <property type="match status" value="1"/>
</dbReference>
<dbReference type="NCBIfam" id="NF004790">
    <property type="entry name" value="PRK06136.1"/>
    <property type="match status" value="1"/>
</dbReference>
<dbReference type="NCBIfam" id="NF007922">
    <property type="entry name" value="PRK10637.1"/>
    <property type="match status" value="1"/>
</dbReference>
<dbReference type="PANTHER" id="PTHR45790:SF1">
    <property type="entry name" value="SIROHEME SYNTHASE"/>
    <property type="match status" value="1"/>
</dbReference>
<dbReference type="PANTHER" id="PTHR45790">
    <property type="entry name" value="SIROHEME SYNTHASE-RELATED"/>
    <property type="match status" value="1"/>
</dbReference>
<dbReference type="Pfam" id="PF10414">
    <property type="entry name" value="CysG_dimeriser"/>
    <property type="match status" value="1"/>
</dbReference>
<dbReference type="Pfam" id="PF13241">
    <property type="entry name" value="NAD_binding_7"/>
    <property type="match status" value="1"/>
</dbReference>
<dbReference type="Pfam" id="PF14824">
    <property type="entry name" value="Sirohm_synth_M"/>
    <property type="match status" value="1"/>
</dbReference>
<dbReference type="Pfam" id="PF00590">
    <property type="entry name" value="TP_methylase"/>
    <property type="match status" value="1"/>
</dbReference>
<dbReference type="PIRSF" id="PIRSF036426">
    <property type="entry name" value="Sirohaem_synth"/>
    <property type="match status" value="1"/>
</dbReference>
<dbReference type="SUPFAM" id="SSF51735">
    <property type="entry name" value="NAD(P)-binding Rossmann-fold domains"/>
    <property type="match status" value="1"/>
</dbReference>
<dbReference type="SUPFAM" id="SSF75615">
    <property type="entry name" value="Siroheme synthase middle domains-like"/>
    <property type="match status" value="1"/>
</dbReference>
<dbReference type="SUPFAM" id="SSF53790">
    <property type="entry name" value="Tetrapyrrole methylase"/>
    <property type="match status" value="1"/>
</dbReference>
<dbReference type="PROSITE" id="PS00839">
    <property type="entry name" value="SUMT_1"/>
    <property type="match status" value="1"/>
</dbReference>
<dbReference type="PROSITE" id="PS00840">
    <property type="entry name" value="SUMT_2"/>
    <property type="match status" value="1"/>
</dbReference>
<comment type="function">
    <text evidence="1">Multifunctional enzyme that catalyzes the SAM-dependent methylations of uroporphyrinogen III at position C-2 and C-7 to form precorrin-2 via precorrin-1. Then it catalyzes the NAD-dependent ring dehydrogenation of precorrin-2 to yield sirohydrochlorin. Finally, it catalyzes the ferrochelation of sirohydrochlorin to yield siroheme.</text>
</comment>
<comment type="catalytic activity">
    <reaction evidence="1">
        <text>uroporphyrinogen III + 2 S-adenosyl-L-methionine = precorrin-2 + 2 S-adenosyl-L-homocysteine + H(+)</text>
        <dbReference type="Rhea" id="RHEA:32459"/>
        <dbReference type="ChEBI" id="CHEBI:15378"/>
        <dbReference type="ChEBI" id="CHEBI:57308"/>
        <dbReference type="ChEBI" id="CHEBI:57856"/>
        <dbReference type="ChEBI" id="CHEBI:58827"/>
        <dbReference type="ChEBI" id="CHEBI:59789"/>
        <dbReference type="EC" id="2.1.1.107"/>
    </reaction>
</comment>
<comment type="catalytic activity">
    <reaction evidence="1">
        <text>precorrin-2 + NAD(+) = sirohydrochlorin + NADH + 2 H(+)</text>
        <dbReference type="Rhea" id="RHEA:15613"/>
        <dbReference type="ChEBI" id="CHEBI:15378"/>
        <dbReference type="ChEBI" id="CHEBI:57540"/>
        <dbReference type="ChEBI" id="CHEBI:57945"/>
        <dbReference type="ChEBI" id="CHEBI:58351"/>
        <dbReference type="ChEBI" id="CHEBI:58827"/>
        <dbReference type="EC" id="1.3.1.76"/>
    </reaction>
</comment>
<comment type="catalytic activity">
    <reaction evidence="1">
        <text>siroheme + 2 H(+) = sirohydrochlorin + Fe(2+)</text>
        <dbReference type="Rhea" id="RHEA:24360"/>
        <dbReference type="ChEBI" id="CHEBI:15378"/>
        <dbReference type="ChEBI" id="CHEBI:29033"/>
        <dbReference type="ChEBI" id="CHEBI:58351"/>
        <dbReference type="ChEBI" id="CHEBI:60052"/>
        <dbReference type="EC" id="4.99.1.4"/>
    </reaction>
</comment>
<comment type="pathway">
    <text evidence="1">Cofactor biosynthesis; adenosylcobalamin biosynthesis; precorrin-2 from uroporphyrinogen III: step 1/1.</text>
</comment>
<comment type="pathway">
    <text evidence="1">Cofactor biosynthesis; adenosylcobalamin biosynthesis; sirohydrochlorin from precorrin-2: step 1/1.</text>
</comment>
<comment type="pathway">
    <text evidence="1">Porphyrin-containing compound metabolism; siroheme biosynthesis; precorrin-2 from uroporphyrinogen III: step 1/1.</text>
</comment>
<comment type="pathway">
    <text evidence="1">Porphyrin-containing compound metabolism; siroheme biosynthesis; siroheme from sirohydrochlorin: step 1/1.</text>
</comment>
<comment type="pathway">
    <text evidence="1">Porphyrin-containing compound metabolism; siroheme biosynthesis; sirohydrochlorin from precorrin-2: step 1/1.</text>
</comment>
<comment type="similarity">
    <text evidence="1">In the N-terminal section; belongs to the precorrin-2 dehydrogenase / sirohydrochlorin ferrochelatase family.</text>
</comment>
<comment type="similarity">
    <text evidence="1">In the C-terminal section; belongs to the precorrin methyltransferase family.</text>
</comment>
<reference key="1">
    <citation type="journal article" date="2010" name="PLoS Genet.">
        <title>Genome sequence of the plant growth promoting endophytic bacterium Enterobacter sp. 638.</title>
        <authorList>
            <person name="Taghavi S."/>
            <person name="van der Lelie D."/>
            <person name="Hoffman A."/>
            <person name="Zhang Y.B."/>
            <person name="Walla M.D."/>
            <person name="Vangronsveld J."/>
            <person name="Newman L."/>
            <person name="Monchy S."/>
        </authorList>
    </citation>
    <scope>NUCLEOTIDE SEQUENCE [LARGE SCALE GENOMIC DNA]</scope>
    <source>
        <strain>638</strain>
    </source>
</reference>
<evidence type="ECO:0000255" key="1">
    <source>
        <dbReference type="HAMAP-Rule" id="MF_01646"/>
    </source>
</evidence>
<proteinExistence type="inferred from homology"/>
<gene>
    <name evidence="1" type="primary">cysG</name>
    <name type="ordered locus">Ent638_3796</name>
</gene>
<organism>
    <name type="scientific">Enterobacter sp. (strain 638)</name>
    <dbReference type="NCBI Taxonomy" id="399742"/>
    <lineage>
        <taxon>Bacteria</taxon>
        <taxon>Pseudomonadati</taxon>
        <taxon>Pseudomonadota</taxon>
        <taxon>Gammaproteobacteria</taxon>
        <taxon>Enterobacterales</taxon>
        <taxon>Enterobacteriaceae</taxon>
        <taxon>Enterobacter</taxon>
    </lineage>
</organism>
<protein>
    <recommendedName>
        <fullName evidence="1">Siroheme synthase</fullName>
    </recommendedName>
    <domain>
        <recommendedName>
            <fullName evidence="1">Uroporphyrinogen-III C-methyltransferase</fullName>
            <shortName evidence="1">Urogen III methylase</shortName>
            <ecNumber evidence="1">2.1.1.107</ecNumber>
        </recommendedName>
        <alternativeName>
            <fullName evidence="1">SUMT</fullName>
        </alternativeName>
        <alternativeName>
            <fullName evidence="1">Uroporphyrinogen III methylase</fullName>
            <shortName evidence="1">UROM</shortName>
        </alternativeName>
    </domain>
    <domain>
        <recommendedName>
            <fullName evidence="1">Precorrin-2 dehydrogenase</fullName>
            <ecNumber evidence="1">1.3.1.76</ecNumber>
        </recommendedName>
    </domain>
    <domain>
        <recommendedName>
            <fullName evidence="1">Sirohydrochlorin ferrochelatase</fullName>
            <ecNumber evidence="1">4.99.1.4</ecNumber>
        </recommendedName>
    </domain>
</protein>
<sequence length="457" mass="50458">MDHLPIFCQLRHRDCLLVGGGDVAERKARLLLEAGARLTVNALAFDPQFNVWAQEGMLTLVQGEFDESLLDTCWLTIAATDDDDVNQRVSDACEIRRIFCNVVDAPKEASFIMPSIIDRSPLMVAVSSGGTSPVLARLLREKLEAILPQHLGQVARYAGQLRARVKTTFATIGERRRFWEKFFVNDRLAQSLANQDQQAVEETTERLLTEPLNHRGEVVLVGAGPGDAGLLTLKGLQQIQQADIVVYDRLVSDDIMNLVRRDADRVFVGKRAGYHCVPQEEINQILLREALKGKRVVRLKGGDPFIFGRGGEELETLCNAGVPFSVVPGITAASGCSAYSGIPLTHRDYAQSVRLVTGHLKTGSELDWHNLAAEKQTLVFYMGLNQAATIQEKLLEHGMQHDMPVALVENGTAITQRVVSGVLTQLGELAKQVESPALIVVGRVVELREKLNWFSNH</sequence>